<feature type="chain" id="PRO_1000094385" description="Shikimate kinase">
    <location>
        <begin position="1"/>
        <end position="184"/>
    </location>
</feature>
<feature type="binding site" evidence="1">
    <location>
        <begin position="15"/>
        <end position="20"/>
    </location>
    <ligand>
        <name>ATP</name>
        <dbReference type="ChEBI" id="CHEBI:30616"/>
    </ligand>
</feature>
<feature type="binding site" evidence="1">
    <location>
        <position position="19"/>
    </location>
    <ligand>
        <name>Mg(2+)</name>
        <dbReference type="ChEBI" id="CHEBI:18420"/>
    </ligand>
</feature>
<feature type="binding site" evidence="1">
    <location>
        <position position="37"/>
    </location>
    <ligand>
        <name>substrate</name>
    </ligand>
</feature>
<feature type="binding site" evidence="1">
    <location>
        <position position="61"/>
    </location>
    <ligand>
        <name>substrate</name>
    </ligand>
</feature>
<feature type="binding site" evidence="1">
    <location>
        <position position="83"/>
    </location>
    <ligand>
        <name>substrate</name>
    </ligand>
</feature>
<feature type="binding site" evidence="1">
    <location>
        <position position="123"/>
    </location>
    <ligand>
        <name>ATP</name>
        <dbReference type="ChEBI" id="CHEBI:30616"/>
    </ligand>
</feature>
<feature type="binding site" evidence="1">
    <location>
        <position position="142"/>
    </location>
    <ligand>
        <name>substrate</name>
    </ligand>
</feature>
<evidence type="ECO:0000255" key="1">
    <source>
        <dbReference type="HAMAP-Rule" id="MF_00109"/>
    </source>
</evidence>
<accession>B6J4A3</accession>
<comment type="function">
    <text evidence="1">Catalyzes the specific phosphorylation of the 3-hydroxyl group of shikimic acid using ATP as a cosubstrate.</text>
</comment>
<comment type="catalytic activity">
    <reaction evidence="1">
        <text>shikimate + ATP = 3-phosphoshikimate + ADP + H(+)</text>
        <dbReference type="Rhea" id="RHEA:13121"/>
        <dbReference type="ChEBI" id="CHEBI:15378"/>
        <dbReference type="ChEBI" id="CHEBI:30616"/>
        <dbReference type="ChEBI" id="CHEBI:36208"/>
        <dbReference type="ChEBI" id="CHEBI:145989"/>
        <dbReference type="ChEBI" id="CHEBI:456216"/>
        <dbReference type="EC" id="2.7.1.71"/>
    </reaction>
</comment>
<comment type="cofactor">
    <cofactor evidence="1">
        <name>Mg(2+)</name>
        <dbReference type="ChEBI" id="CHEBI:18420"/>
    </cofactor>
    <text evidence="1">Binds 1 Mg(2+) ion per subunit.</text>
</comment>
<comment type="pathway">
    <text evidence="1">Metabolic intermediate biosynthesis; chorismate biosynthesis; chorismate from D-erythrose 4-phosphate and phosphoenolpyruvate: step 5/7.</text>
</comment>
<comment type="subunit">
    <text evidence="1">Monomer.</text>
</comment>
<comment type="subcellular location">
    <subcellularLocation>
        <location evidence="1">Cytoplasm</location>
    </subcellularLocation>
</comment>
<comment type="similarity">
    <text evidence="1">Belongs to the shikimate kinase family.</text>
</comment>
<keyword id="KW-0028">Amino-acid biosynthesis</keyword>
<keyword id="KW-0057">Aromatic amino acid biosynthesis</keyword>
<keyword id="KW-0067">ATP-binding</keyword>
<keyword id="KW-0963">Cytoplasm</keyword>
<keyword id="KW-0418">Kinase</keyword>
<keyword id="KW-0460">Magnesium</keyword>
<keyword id="KW-0479">Metal-binding</keyword>
<keyword id="KW-0547">Nucleotide-binding</keyword>
<keyword id="KW-0808">Transferase</keyword>
<reference key="1">
    <citation type="journal article" date="2009" name="Infect. Immun.">
        <title>Comparative genomics reveal extensive transposon-mediated genomic plasticity and diversity among potential effector proteins within the genus Coxiella.</title>
        <authorList>
            <person name="Beare P.A."/>
            <person name="Unsworth N."/>
            <person name="Andoh M."/>
            <person name="Voth D.E."/>
            <person name="Omsland A."/>
            <person name="Gilk S.D."/>
            <person name="Williams K.P."/>
            <person name="Sobral B.W."/>
            <person name="Kupko J.J. III"/>
            <person name="Porcella S.F."/>
            <person name="Samuel J.E."/>
            <person name="Heinzen R.A."/>
        </authorList>
    </citation>
    <scope>NUCLEOTIDE SEQUENCE [LARGE SCALE GENOMIC DNA]</scope>
    <source>
        <strain>CbuK_Q154</strain>
    </source>
</reference>
<organism>
    <name type="scientific">Coxiella burnetii (strain CbuK_Q154)</name>
    <name type="common">Coxiella burnetii (strain Q154)</name>
    <dbReference type="NCBI Taxonomy" id="434924"/>
    <lineage>
        <taxon>Bacteria</taxon>
        <taxon>Pseudomonadati</taxon>
        <taxon>Pseudomonadota</taxon>
        <taxon>Gammaproteobacteria</taxon>
        <taxon>Legionellales</taxon>
        <taxon>Coxiellaceae</taxon>
        <taxon>Coxiella</taxon>
    </lineage>
</organism>
<sequence length="184" mass="21052">MKKNLTNIYLIGPMGAGKTSVGSQLAKLTKRILYDSDKEIEKRTGADIAWIFEMEGEAGFRRREREMIEALCKLDNIILATGGGVVLDEKNRQQISETGVVIYLTASIDTQLKRIGQKGEMRRPLFIKNNSKEKLQQLNEIRKPLYQAMADLVYPTDDLNPRQLATQILVDIKQTYQTYENRTR</sequence>
<dbReference type="EC" id="2.7.1.71" evidence="1"/>
<dbReference type="EMBL" id="CP001020">
    <property type="protein sequence ID" value="ACJ19507.1"/>
    <property type="molecule type" value="Genomic_DNA"/>
</dbReference>
<dbReference type="RefSeq" id="WP_005770313.1">
    <property type="nucleotide sequence ID" value="NC_011528.1"/>
</dbReference>
<dbReference type="SMR" id="B6J4A3"/>
<dbReference type="KEGG" id="cbc:CbuK_0191"/>
<dbReference type="HOGENOM" id="CLU_057607_2_2_6"/>
<dbReference type="UniPathway" id="UPA00053">
    <property type="reaction ID" value="UER00088"/>
</dbReference>
<dbReference type="GO" id="GO:0005829">
    <property type="term" value="C:cytosol"/>
    <property type="evidence" value="ECO:0007669"/>
    <property type="project" value="TreeGrafter"/>
</dbReference>
<dbReference type="GO" id="GO:0005524">
    <property type="term" value="F:ATP binding"/>
    <property type="evidence" value="ECO:0007669"/>
    <property type="project" value="UniProtKB-UniRule"/>
</dbReference>
<dbReference type="GO" id="GO:0000287">
    <property type="term" value="F:magnesium ion binding"/>
    <property type="evidence" value="ECO:0007669"/>
    <property type="project" value="UniProtKB-UniRule"/>
</dbReference>
<dbReference type="GO" id="GO:0004765">
    <property type="term" value="F:shikimate kinase activity"/>
    <property type="evidence" value="ECO:0007669"/>
    <property type="project" value="UniProtKB-UniRule"/>
</dbReference>
<dbReference type="GO" id="GO:0008652">
    <property type="term" value="P:amino acid biosynthetic process"/>
    <property type="evidence" value="ECO:0007669"/>
    <property type="project" value="UniProtKB-KW"/>
</dbReference>
<dbReference type="GO" id="GO:0009073">
    <property type="term" value="P:aromatic amino acid family biosynthetic process"/>
    <property type="evidence" value="ECO:0007669"/>
    <property type="project" value="UniProtKB-KW"/>
</dbReference>
<dbReference type="GO" id="GO:0009423">
    <property type="term" value="P:chorismate biosynthetic process"/>
    <property type="evidence" value="ECO:0007669"/>
    <property type="project" value="UniProtKB-UniRule"/>
</dbReference>
<dbReference type="CDD" id="cd00464">
    <property type="entry name" value="SK"/>
    <property type="match status" value="1"/>
</dbReference>
<dbReference type="Gene3D" id="3.40.50.300">
    <property type="entry name" value="P-loop containing nucleotide triphosphate hydrolases"/>
    <property type="match status" value="1"/>
</dbReference>
<dbReference type="HAMAP" id="MF_00109">
    <property type="entry name" value="Shikimate_kinase"/>
    <property type="match status" value="1"/>
</dbReference>
<dbReference type="InterPro" id="IPR027417">
    <property type="entry name" value="P-loop_NTPase"/>
</dbReference>
<dbReference type="InterPro" id="IPR031322">
    <property type="entry name" value="Shikimate/glucono_kinase"/>
</dbReference>
<dbReference type="InterPro" id="IPR000623">
    <property type="entry name" value="Shikimate_kinase/TSH1"/>
</dbReference>
<dbReference type="InterPro" id="IPR023000">
    <property type="entry name" value="Shikimate_kinase_CS"/>
</dbReference>
<dbReference type="PANTHER" id="PTHR21087">
    <property type="entry name" value="SHIKIMATE KINASE"/>
    <property type="match status" value="1"/>
</dbReference>
<dbReference type="PANTHER" id="PTHR21087:SF16">
    <property type="entry name" value="SHIKIMATE KINASE 1, CHLOROPLASTIC"/>
    <property type="match status" value="1"/>
</dbReference>
<dbReference type="Pfam" id="PF01202">
    <property type="entry name" value="SKI"/>
    <property type="match status" value="1"/>
</dbReference>
<dbReference type="PRINTS" id="PR01100">
    <property type="entry name" value="SHIKIMTKNASE"/>
</dbReference>
<dbReference type="SUPFAM" id="SSF52540">
    <property type="entry name" value="P-loop containing nucleoside triphosphate hydrolases"/>
    <property type="match status" value="1"/>
</dbReference>
<dbReference type="PROSITE" id="PS01128">
    <property type="entry name" value="SHIKIMATE_KINASE"/>
    <property type="match status" value="1"/>
</dbReference>
<name>AROK_COXB1</name>
<protein>
    <recommendedName>
        <fullName evidence="1">Shikimate kinase</fullName>
        <shortName evidence="1">SK</shortName>
        <ecNumber evidence="1">2.7.1.71</ecNumber>
    </recommendedName>
</protein>
<proteinExistence type="inferred from homology"/>
<gene>
    <name evidence="1" type="primary">aroK</name>
    <name type="ordered locus">CbuK_0191</name>
</gene>